<gene>
    <name evidence="3" type="primary">PRKAR1A</name>
</gene>
<organism>
    <name type="scientific">Mesocricetus auratus</name>
    <name type="common">Golden hamster</name>
    <dbReference type="NCBI Taxonomy" id="10036"/>
    <lineage>
        <taxon>Eukaryota</taxon>
        <taxon>Metazoa</taxon>
        <taxon>Chordata</taxon>
        <taxon>Craniata</taxon>
        <taxon>Vertebrata</taxon>
        <taxon>Euteleostomi</taxon>
        <taxon>Mammalia</taxon>
        <taxon>Eutheria</taxon>
        <taxon>Euarchontoglires</taxon>
        <taxon>Glires</taxon>
        <taxon>Rodentia</taxon>
        <taxon>Myomorpha</taxon>
        <taxon>Muroidea</taxon>
        <taxon>Cricetidae</taxon>
        <taxon>Cricetinae</taxon>
        <taxon>Mesocricetus</taxon>
    </lineage>
</organism>
<accession>P86244</accession>
<evidence type="ECO:0000250" key="1"/>
<evidence type="ECO:0000250" key="2">
    <source>
        <dbReference type="UniProtKB" id="P09456"/>
    </source>
</evidence>
<evidence type="ECO:0000250" key="3">
    <source>
        <dbReference type="UniProtKB" id="P10644"/>
    </source>
</evidence>
<evidence type="ECO:0000250" key="4">
    <source>
        <dbReference type="UniProtKB" id="Q9DBC7"/>
    </source>
</evidence>
<evidence type="ECO:0000255" key="5"/>
<evidence type="ECO:0000305" key="6"/>
<protein>
    <recommendedName>
        <fullName evidence="3">cAMP-dependent protein kinase type I-alpha regulatory subunit</fullName>
    </recommendedName>
</protein>
<proteinExistence type="evidence at protein level"/>
<name>KAP0_MESAU</name>
<comment type="function">
    <text evidence="1">Regulatory subunit of the cAMP-dependent protein kinases involved in cAMP signaling in cells.</text>
</comment>
<comment type="subunit">
    <text evidence="1 3">The inactive holoenzyme is composed of two regulatory chains and two catalytic chains. Activation by cAMP releases the two active catalytic monomers and the regulatory dimer. Interacts with PRKACA and PRKACB (By similarity). PRKAR1A also interacts with RFC2; the complex may be involved in cell survival. Interacts with AKAP4. Interacts with RARA; the interaction occurs in the presence of cAMP or FSH and regulates RARA transcriptional activity. Interacts with the phosphorylated form of PJA2. Interacts with CBFA2T3. Interacts with PRKX; regulates this cAMP-dependent protein kinase (By similarity). Interacts with smAKAP; this interaction may target PRKAR1A to the plasma membrane. Interacts with AICDA (By similarity).</text>
</comment>
<comment type="subcellular location">
    <subcellularLocation>
        <location evidence="1">Cell membrane</location>
    </subcellularLocation>
</comment>
<comment type="PTM">
    <text evidence="3">The pseudophosphorylation site binds to the substrate-binding region of the catalytic chain, resulting in the inhibition of its activity.</text>
</comment>
<comment type="similarity">
    <text evidence="5">Belongs to the cAMP-dependent kinase regulatory chain family.</text>
</comment>
<feature type="chain" id="PRO_0000394420" description="cAMP-dependent protein kinase type I-alpha regulatory subunit">
    <location>
        <begin position="1" status="less than"/>
        <end position="167" status="greater than"/>
    </location>
</feature>
<feature type="short sequence motif" description="Pseudophosphorylation motif" evidence="4">
    <location>
        <begin position="30" status="less than"/>
        <end position="33"/>
    </location>
</feature>
<feature type="binding site" evidence="4">
    <location>
        <begin position="51"/>
        <end position="78"/>
    </location>
    <ligand>
        <name>3',5'-cyclic AMP</name>
        <dbReference type="ChEBI" id="CHEBI:58165"/>
        <label>1</label>
    </ligand>
</feature>
<feature type="binding site" evidence="4">
    <location>
        <begin position="79"/>
        <end position="167" status="greater than"/>
    </location>
    <ligand>
        <name>3',5'-cyclic AMP</name>
        <dbReference type="ChEBI" id="CHEBI:58165"/>
        <label>2</label>
    </ligand>
</feature>
<feature type="binding site" evidence="4">
    <location>
        <position position="147"/>
    </location>
    <ligand>
        <name>3',5'-cyclic AMP</name>
        <dbReference type="ChEBI" id="CHEBI:58165"/>
        <label>2</label>
    </ligand>
</feature>
<feature type="binding site" evidence="4">
    <location>
        <position position="156"/>
    </location>
    <ligand>
        <name>3',5'-cyclic AMP</name>
        <dbReference type="ChEBI" id="CHEBI:58165"/>
        <label>2</label>
    </ligand>
</feature>
<feature type="modified residue" description="Phosphothreonine" evidence="3">
    <location>
        <position position="12"/>
    </location>
</feature>
<feature type="modified residue" description="Phosphoserine" evidence="3">
    <location>
        <position position="14"/>
    </location>
</feature>
<feature type="modified residue" description="Phosphoserine" evidence="3">
    <location>
        <position position="20"/>
    </location>
</feature>
<feature type="modified residue" description="Phosphoserine" evidence="4">
    <location>
        <position position="34"/>
    </location>
</feature>
<feature type="modified residue" description="Phosphoserine" evidence="2">
    <location>
        <position position="82"/>
    </location>
</feature>
<feature type="disulfide bond" description="Interchain" evidence="4">
    <location>
        <position position="5"/>
    </location>
</feature>
<feature type="non-consecutive residues" evidence="6">
    <location>
        <begin position="11"/>
        <end position="12"/>
    </location>
</feature>
<feature type="non-consecutive residues" evidence="6">
    <location>
        <begin position="29"/>
        <end position="30"/>
    </location>
</feature>
<feature type="non-consecutive residues" evidence="6">
    <location>
        <begin position="48"/>
        <end position="49"/>
    </location>
</feature>
<feature type="non-consecutive residues" evidence="6">
    <location>
        <begin position="60"/>
        <end position="61"/>
    </location>
</feature>
<feature type="non-consecutive residues" evidence="6">
    <location>
        <begin position="68"/>
        <end position="69"/>
    </location>
</feature>
<feature type="non-consecutive residues" evidence="6">
    <location>
        <begin position="85"/>
        <end position="86"/>
    </location>
</feature>
<feature type="non-consecutive residues" evidence="6">
    <location>
        <begin position="102"/>
        <end position="103"/>
    </location>
</feature>
<feature type="non-consecutive residues" evidence="6">
    <location>
        <begin position="126"/>
        <end position="127"/>
    </location>
</feature>
<feature type="non-consecutive residues" evidence="6">
    <location>
        <begin position="138"/>
        <end position="139"/>
    </location>
</feature>
<feature type="non-consecutive residues" evidence="6">
    <location>
        <begin position="156"/>
        <end position="157"/>
    </location>
</feature>
<feature type="non-terminal residue" evidence="6">
    <location>
        <position position="1"/>
    </location>
</feature>
<feature type="non-terminal residue" evidence="6">
    <location>
        <position position="167"/>
    </location>
</feature>
<dbReference type="SMR" id="P86244"/>
<dbReference type="Proteomes" id="UP000189706">
    <property type="component" value="Unplaced"/>
</dbReference>
<dbReference type="GO" id="GO:0005952">
    <property type="term" value="C:cAMP-dependent protein kinase complex"/>
    <property type="evidence" value="ECO:0007669"/>
    <property type="project" value="InterPro"/>
</dbReference>
<dbReference type="GO" id="GO:0005829">
    <property type="term" value="C:cytosol"/>
    <property type="evidence" value="ECO:0007669"/>
    <property type="project" value="TreeGrafter"/>
</dbReference>
<dbReference type="GO" id="GO:0005886">
    <property type="term" value="C:plasma membrane"/>
    <property type="evidence" value="ECO:0007669"/>
    <property type="project" value="UniProtKB-SubCell"/>
</dbReference>
<dbReference type="GO" id="GO:0030552">
    <property type="term" value="F:cAMP binding"/>
    <property type="evidence" value="ECO:0007669"/>
    <property type="project" value="UniProtKB-KW"/>
</dbReference>
<dbReference type="GO" id="GO:0004862">
    <property type="term" value="F:cAMP-dependent protein kinase inhibitor activity"/>
    <property type="evidence" value="ECO:0007669"/>
    <property type="project" value="TreeGrafter"/>
</dbReference>
<dbReference type="GO" id="GO:0034236">
    <property type="term" value="F:protein kinase A catalytic subunit binding"/>
    <property type="evidence" value="ECO:0007669"/>
    <property type="project" value="TreeGrafter"/>
</dbReference>
<dbReference type="CDD" id="cd00038">
    <property type="entry name" value="CAP_ED"/>
    <property type="match status" value="1"/>
</dbReference>
<dbReference type="Gene3D" id="2.60.120.10">
    <property type="entry name" value="Jelly Rolls"/>
    <property type="match status" value="1"/>
</dbReference>
<dbReference type="InterPro" id="IPR050503">
    <property type="entry name" value="cAMP-dep_PK_reg_su-like"/>
</dbReference>
<dbReference type="InterPro" id="IPR018488">
    <property type="entry name" value="cNMP-bd_CS"/>
</dbReference>
<dbReference type="InterPro" id="IPR000595">
    <property type="entry name" value="cNMP-bd_dom"/>
</dbReference>
<dbReference type="InterPro" id="IPR018490">
    <property type="entry name" value="cNMP-bd_dom_sf"/>
</dbReference>
<dbReference type="InterPro" id="IPR014710">
    <property type="entry name" value="RmlC-like_jellyroll"/>
</dbReference>
<dbReference type="PANTHER" id="PTHR11635">
    <property type="entry name" value="CAMP-DEPENDENT PROTEIN KINASE REGULATORY CHAIN"/>
    <property type="match status" value="1"/>
</dbReference>
<dbReference type="PANTHER" id="PTHR11635:SF129">
    <property type="entry name" value="CAMP-DEPENDENT PROTEIN KINASE TYPE I-ALPHA REGULATORY SUBUNIT"/>
    <property type="match status" value="1"/>
</dbReference>
<dbReference type="Pfam" id="PF00027">
    <property type="entry name" value="cNMP_binding"/>
    <property type="match status" value="1"/>
</dbReference>
<dbReference type="PRINTS" id="PR00103">
    <property type="entry name" value="CAMPKINASE"/>
</dbReference>
<dbReference type="SUPFAM" id="SSF51206">
    <property type="entry name" value="cAMP-binding domain-like"/>
    <property type="match status" value="1"/>
</dbReference>
<dbReference type="PROSITE" id="PS00888">
    <property type="entry name" value="CNMP_BINDING_1"/>
    <property type="match status" value="1"/>
</dbReference>
<dbReference type="PROSITE" id="PS50042">
    <property type="entry name" value="CNMP_BINDING_3"/>
    <property type="match status" value="1"/>
</dbReference>
<reference key="1">
    <citation type="journal article" date="2010" name="Asian J. Androl.">
        <title>Glucose-regulated protein precursor (GRP78) and tumor rejection antigen (GP96) are unique to hamster caput epididymal spermatozoa.</title>
        <authorList>
            <person name="Kameshwari D.B."/>
            <person name="Bhande S."/>
            <person name="Sundaram C.S."/>
            <person name="Kota V."/>
            <person name="Siva A.B."/>
            <person name="Shivaji S."/>
        </authorList>
    </citation>
    <scope>IDENTIFICATION BY MASS SPECTROMETRY</scope>
</reference>
<sequence length="167" mass="18794">SLRECELYVQKTDSREDEISPPPPNPVVKRGAISAEVYTEEDAASYVRNVLFSHLDDNERILMGSTLRMYEEFLSKVSILESLDKLTVADALEPVQFEDGQKIVVQGEPGDEFFIILEGTAAVLQRRSENEEFVEVGRLGPSDYFGEIALLMNRPRVLGPCSDILKR</sequence>
<keyword id="KW-0114">cAMP</keyword>
<keyword id="KW-0116">cAMP-binding</keyword>
<keyword id="KW-1003">Cell membrane</keyword>
<keyword id="KW-1015">Disulfide bond</keyword>
<keyword id="KW-0472">Membrane</keyword>
<keyword id="KW-0547">Nucleotide-binding</keyword>
<keyword id="KW-0597">Phosphoprotein</keyword>
<keyword id="KW-1185">Reference proteome</keyword>
<keyword id="KW-0677">Repeat</keyword>